<feature type="chain" id="PRO_0000319266" description="Formate-dependent phosphoribosylglycinamide formyltransferase">
    <location>
        <begin position="1"/>
        <end position="400"/>
    </location>
</feature>
<feature type="domain" description="ATP-grasp" evidence="1">
    <location>
        <begin position="120"/>
        <end position="309"/>
    </location>
</feature>
<feature type="binding site" evidence="1">
    <location>
        <begin position="22"/>
        <end position="23"/>
    </location>
    <ligand>
        <name>N(1)-(5-phospho-beta-D-ribosyl)glycinamide</name>
        <dbReference type="ChEBI" id="CHEBI:143788"/>
    </ligand>
</feature>
<feature type="binding site" evidence="1">
    <location>
        <position position="82"/>
    </location>
    <ligand>
        <name>N(1)-(5-phospho-beta-D-ribosyl)glycinamide</name>
        <dbReference type="ChEBI" id="CHEBI:143788"/>
    </ligand>
</feature>
<feature type="binding site" evidence="1">
    <location>
        <position position="115"/>
    </location>
    <ligand>
        <name>ATP</name>
        <dbReference type="ChEBI" id="CHEBI:30616"/>
    </ligand>
</feature>
<feature type="binding site" evidence="1">
    <location>
        <position position="156"/>
    </location>
    <ligand>
        <name>ATP</name>
        <dbReference type="ChEBI" id="CHEBI:30616"/>
    </ligand>
</feature>
<feature type="binding site" evidence="1">
    <location>
        <begin position="161"/>
        <end position="166"/>
    </location>
    <ligand>
        <name>ATP</name>
        <dbReference type="ChEBI" id="CHEBI:30616"/>
    </ligand>
</feature>
<feature type="binding site" evidence="1">
    <location>
        <begin position="196"/>
        <end position="199"/>
    </location>
    <ligand>
        <name>ATP</name>
        <dbReference type="ChEBI" id="CHEBI:30616"/>
    </ligand>
</feature>
<feature type="binding site" evidence="1">
    <location>
        <position position="204"/>
    </location>
    <ligand>
        <name>ATP</name>
        <dbReference type="ChEBI" id="CHEBI:30616"/>
    </ligand>
</feature>
<feature type="binding site" evidence="1">
    <location>
        <position position="268"/>
    </location>
    <ligand>
        <name>Mg(2+)</name>
        <dbReference type="ChEBI" id="CHEBI:18420"/>
    </ligand>
</feature>
<feature type="binding site" evidence="1">
    <location>
        <position position="280"/>
    </location>
    <ligand>
        <name>Mg(2+)</name>
        <dbReference type="ChEBI" id="CHEBI:18420"/>
    </ligand>
</feature>
<feature type="binding site" evidence="1">
    <location>
        <position position="287"/>
    </location>
    <ligand>
        <name>N(1)-(5-phospho-beta-D-ribosyl)glycinamide</name>
        <dbReference type="ChEBI" id="CHEBI:143788"/>
    </ligand>
</feature>
<feature type="binding site" evidence="1">
    <location>
        <position position="361"/>
    </location>
    <ligand>
        <name>N(1)-(5-phospho-beta-D-ribosyl)glycinamide</name>
        <dbReference type="ChEBI" id="CHEBI:143788"/>
    </ligand>
</feature>
<feature type="binding site" evidence="1">
    <location>
        <begin position="368"/>
        <end position="369"/>
    </location>
    <ligand>
        <name>N(1)-(5-phospho-beta-D-ribosyl)glycinamide</name>
        <dbReference type="ChEBI" id="CHEBI:143788"/>
    </ligand>
</feature>
<accession>Q4US21</accession>
<organism>
    <name type="scientific">Xanthomonas campestris pv. campestris (strain 8004)</name>
    <dbReference type="NCBI Taxonomy" id="314565"/>
    <lineage>
        <taxon>Bacteria</taxon>
        <taxon>Pseudomonadati</taxon>
        <taxon>Pseudomonadota</taxon>
        <taxon>Gammaproteobacteria</taxon>
        <taxon>Lysobacterales</taxon>
        <taxon>Lysobacteraceae</taxon>
        <taxon>Xanthomonas</taxon>
    </lineage>
</organism>
<protein>
    <recommendedName>
        <fullName evidence="1">Formate-dependent phosphoribosylglycinamide formyltransferase</fullName>
        <ecNumber evidence="1">6.3.1.21</ecNumber>
    </recommendedName>
    <alternativeName>
        <fullName evidence="1">5'-phosphoribosylglycinamide transformylase 2</fullName>
    </alternativeName>
    <alternativeName>
        <fullName evidence="1">Formate-dependent GAR transformylase</fullName>
    </alternativeName>
    <alternativeName>
        <fullName evidence="1">GAR transformylase 2</fullName>
        <shortName evidence="1">GART 2</shortName>
    </alternativeName>
    <alternativeName>
        <fullName evidence="1">Non-folate glycinamide ribonucleotide transformylase</fullName>
    </alternativeName>
    <alternativeName>
        <fullName evidence="1">Phosphoribosylglycinamide formyltransferase 2</fullName>
    </alternativeName>
</protein>
<comment type="function">
    <text evidence="1">Involved in the de novo purine biosynthesis. Catalyzes the transfer of formate to 5-phospho-ribosyl-glycinamide (GAR), producing 5-phospho-ribosyl-N-formylglycinamide (FGAR). Formate is provided by PurU via hydrolysis of 10-formyl-tetrahydrofolate.</text>
</comment>
<comment type="catalytic activity">
    <reaction evidence="1">
        <text>N(1)-(5-phospho-beta-D-ribosyl)glycinamide + formate + ATP = N(2)-formyl-N(1)-(5-phospho-beta-D-ribosyl)glycinamide + ADP + phosphate + H(+)</text>
        <dbReference type="Rhea" id="RHEA:24829"/>
        <dbReference type="ChEBI" id="CHEBI:15378"/>
        <dbReference type="ChEBI" id="CHEBI:15740"/>
        <dbReference type="ChEBI" id="CHEBI:30616"/>
        <dbReference type="ChEBI" id="CHEBI:43474"/>
        <dbReference type="ChEBI" id="CHEBI:143788"/>
        <dbReference type="ChEBI" id="CHEBI:147286"/>
        <dbReference type="ChEBI" id="CHEBI:456216"/>
        <dbReference type="EC" id="6.3.1.21"/>
    </reaction>
    <physiologicalReaction direction="left-to-right" evidence="1">
        <dbReference type="Rhea" id="RHEA:24830"/>
    </physiologicalReaction>
</comment>
<comment type="pathway">
    <text evidence="1">Purine metabolism; IMP biosynthesis via de novo pathway; N(2)-formyl-N(1)-(5-phospho-D-ribosyl)glycinamide from N(1)-(5-phospho-D-ribosyl)glycinamide (formate route): step 1/1.</text>
</comment>
<comment type="subunit">
    <text evidence="1">Homodimer.</text>
</comment>
<comment type="similarity">
    <text evidence="1">Belongs to the PurK/PurT family.</text>
</comment>
<name>PURT_XANC8</name>
<gene>
    <name evidence="1" type="primary">purT</name>
    <name type="ordered locus">XC_3106</name>
</gene>
<dbReference type="EC" id="6.3.1.21" evidence="1"/>
<dbReference type="EMBL" id="CP000050">
    <property type="protein sequence ID" value="AAY50152.1"/>
    <property type="molecule type" value="Genomic_DNA"/>
</dbReference>
<dbReference type="RefSeq" id="WP_011036337.1">
    <property type="nucleotide sequence ID" value="NZ_CP155948.1"/>
</dbReference>
<dbReference type="SMR" id="Q4US21"/>
<dbReference type="KEGG" id="xcb:XC_3106"/>
<dbReference type="HOGENOM" id="CLU_011534_1_3_6"/>
<dbReference type="UniPathway" id="UPA00074">
    <property type="reaction ID" value="UER00127"/>
</dbReference>
<dbReference type="Proteomes" id="UP000000420">
    <property type="component" value="Chromosome"/>
</dbReference>
<dbReference type="GO" id="GO:0005829">
    <property type="term" value="C:cytosol"/>
    <property type="evidence" value="ECO:0007669"/>
    <property type="project" value="TreeGrafter"/>
</dbReference>
<dbReference type="GO" id="GO:0005524">
    <property type="term" value="F:ATP binding"/>
    <property type="evidence" value="ECO:0007669"/>
    <property type="project" value="UniProtKB-UniRule"/>
</dbReference>
<dbReference type="GO" id="GO:0000287">
    <property type="term" value="F:magnesium ion binding"/>
    <property type="evidence" value="ECO:0007669"/>
    <property type="project" value="InterPro"/>
</dbReference>
<dbReference type="GO" id="GO:0043815">
    <property type="term" value="F:phosphoribosylglycinamide formyltransferase 2 activity"/>
    <property type="evidence" value="ECO:0007669"/>
    <property type="project" value="UniProtKB-UniRule"/>
</dbReference>
<dbReference type="GO" id="GO:0004644">
    <property type="term" value="F:phosphoribosylglycinamide formyltransferase activity"/>
    <property type="evidence" value="ECO:0007669"/>
    <property type="project" value="InterPro"/>
</dbReference>
<dbReference type="GO" id="GO:0006189">
    <property type="term" value="P:'de novo' IMP biosynthetic process"/>
    <property type="evidence" value="ECO:0007669"/>
    <property type="project" value="UniProtKB-UniRule"/>
</dbReference>
<dbReference type="FunFam" id="3.30.1490.20:FF:000013">
    <property type="entry name" value="Formate-dependent phosphoribosylglycinamide formyltransferase"/>
    <property type="match status" value="1"/>
</dbReference>
<dbReference type="FunFam" id="3.30.470.20:FF:000027">
    <property type="entry name" value="Formate-dependent phosphoribosylglycinamide formyltransferase"/>
    <property type="match status" value="1"/>
</dbReference>
<dbReference type="FunFam" id="3.40.50.20:FF:000007">
    <property type="entry name" value="Formate-dependent phosphoribosylglycinamide formyltransferase"/>
    <property type="match status" value="1"/>
</dbReference>
<dbReference type="Gene3D" id="3.40.50.20">
    <property type="match status" value="1"/>
</dbReference>
<dbReference type="Gene3D" id="3.30.1490.20">
    <property type="entry name" value="ATP-grasp fold, A domain"/>
    <property type="match status" value="1"/>
</dbReference>
<dbReference type="Gene3D" id="3.30.470.20">
    <property type="entry name" value="ATP-grasp fold, B domain"/>
    <property type="match status" value="1"/>
</dbReference>
<dbReference type="HAMAP" id="MF_01643">
    <property type="entry name" value="PurT"/>
    <property type="match status" value="1"/>
</dbReference>
<dbReference type="InterPro" id="IPR011761">
    <property type="entry name" value="ATP-grasp"/>
</dbReference>
<dbReference type="InterPro" id="IPR003135">
    <property type="entry name" value="ATP-grasp_carboxylate-amine"/>
</dbReference>
<dbReference type="InterPro" id="IPR013815">
    <property type="entry name" value="ATP_grasp_subdomain_1"/>
</dbReference>
<dbReference type="InterPro" id="IPR016185">
    <property type="entry name" value="PreATP-grasp_dom_sf"/>
</dbReference>
<dbReference type="InterPro" id="IPR005862">
    <property type="entry name" value="PurT"/>
</dbReference>
<dbReference type="InterPro" id="IPR054350">
    <property type="entry name" value="PurT/PurK_preATP-grasp"/>
</dbReference>
<dbReference type="InterPro" id="IPR048740">
    <property type="entry name" value="PurT_C"/>
</dbReference>
<dbReference type="InterPro" id="IPR011054">
    <property type="entry name" value="Rudment_hybrid_motif"/>
</dbReference>
<dbReference type="NCBIfam" id="NF006766">
    <property type="entry name" value="PRK09288.1"/>
    <property type="match status" value="1"/>
</dbReference>
<dbReference type="NCBIfam" id="TIGR01142">
    <property type="entry name" value="purT"/>
    <property type="match status" value="1"/>
</dbReference>
<dbReference type="PANTHER" id="PTHR43055">
    <property type="entry name" value="FORMATE-DEPENDENT PHOSPHORIBOSYLGLYCINAMIDE FORMYLTRANSFERASE"/>
    <property type="match status" value="1"/>
</dbReference>
<dbReference type="PANTHER" id="PTHR43055:SF1">
    <property type="entry name" value="FORMATE-DEPENDENT PHOSPHORIBOSYLGLYCINAMIDE FORMYLTRANSFERASE"/>
    <property type="match status" value="1"/>
</dbReference>
<dbReference type="Pfam" id="PF02222">
    <property type="entry name" value="ATP-grasp"/>
    <property type="match status" value="1"/>
</dbReference>
<dbReference type="Pfam" id="PF21244">
    <property type="entry name" value="PurT_C"/>
    <property type="match status" value="1"/>
</dbReference>
<dbReference type="Pfam" id="PF22660">
    <property type="entry name" value="RS_preATP-grasp-like"/>
    <property type="match status" value="1"/>
</dbReference>
<dbReference type="SUPFAM" id="SSF56059">
    <property type="entry name" value="Glutathione synthetase ATP-binding domain-like"/>
    <property type="match status" value="1"/>
</dbReference>
<dbReference type="SUPFAM" id="SSF52440">
    <property type="entry name" value="PreATP-grasp domain"/>
    <property type="match status" value="1"/>
</dbReference>
<dbReference type="SUPFAM" id="SSF51246">
    <property type="entry name" value="Rudiment single hybrid motif"/>
    <property type="match status" value="1"/>
</dbReference>
<dbReference type="PROSITE" id="PS50975">
    <property type="entry name" value="ATP_GRASP"/>
    <property type="match status" value="1"/>
</dbReference>
<evidence type="ECO:0000255" key="1">
    <source>
        <dbReference type="HAMAP-Rule" id="MF_01643"/>
    </source>
</evidence>
<proteinExistence type="inferred from homology"/>
<sequence length="400" mass="42926">MTTLGTPLSPSATRVLLLGSGELGKEVAIELQRFGVEVIAADRYANAPAMQVAHRSHVLDMLDPQALRALIAQEQPHLIVPEIEAIHTETLVALEHEQGQKVIPTARAARLTMDREGIRRLAAETLGLPTSPYRFVDTAAEYREAIATVGLPCVVKPVMSSSGKGQSTLRSEADIDAAWDYAQTGGRAGAGRCIVEGFIDFDYEITLLTVRHAGGTSFCDPIGHWQKDGDYRESWQPQPMSAAALRRSQEIAQAITDELGGWGLFGVELFVKGDEVWFSEVSPRPHDTGLVTLVSQELSEFALHARAILGLPVGAENGGVIRQSGPSASCALLAHGNGVPVFDNVAEALRDPDTALRLFGKPRVDGHRRVGVTLARAGSIDAAREKARVAAAALTIQLRD</sequence>
<keyword id="KW-0067">ATP-binding</keyword>
<keyword id="KW-0436">Ligase</keyword>
<keyword id="KW-0460">Magnesium</keyword>
<keyword id="KW-0479">Metal-binding</keyword>
<keyword id="KW-0547">Nucleotide-binding</keyword>
<keyword id="KW-0658">Purine biosynthesis</keyword>
<reference key="1">
    <citation type="journal article" date="2005" name="Genome Res.">
        <title>Comparative and functional genomic analyses of the pathogenicity of phytopathogen Xanthomonas campestris pv. campestris.</title>
        <authorList>
            <person name="Qian W."/>
            <person name="Jia Y."/>
            <person name="Ren S.-X."/>
            <person name="He Y.-Q."/>
            <person name="Feng J.-X."/>
            <person name="Lu L.-F."/>
            <person name="Sun Q."/>
            <person name="Ying G."/>
            <person name="Tang D.-J."/>
            <person name="Tang H."/>
            <person name="Wu W."/>
            <person name="Hao P."/>
            <person name="Wang L."/>
            <person name="Jiang B.-L."/>
            <person name="Zeng S."/>
            <person name="Gu W.-Y."/>
            <person name="Lu G."/>
            <person name="Rong L."/>
            <person name="Tian Y."/>
            <person name="Yao Z."/>
            <person name="Fu G."/>
            <person name="Chen B."/>
            <person name="Fang R."/>
            <person name="Qiang B."/>
            <person name="Chen Z."/>
            <person name="Zhao G.-P."/>
            <person name="Tang J.-L."/>
            <person name="He C."/>
        </authorList>
    </citation>
    <scope>NUCLEOTIDE SEQUENCE [LARGE SCALE GENOMIC DNA]</scope>
    <source>
        <strain>8004</strain>
    </source>
</reference>